<reference key="1">
    <citation type="submission" date="2007-02" db="EMBL/GenBank/DDBJ databases">
        <title>Complete sequence of Clostridium thermocellum ATCC 27405.</title>
        <authorList>
            <consortium name="US DOE Joint Genome Institute"/>
            <person name="Copeland A."/>
            <person name="Lucas S."/>
            <person name="Lapidus A."/>
            <person name="Barry K."/>
            <person name="Detter J.C."/>
            <person name="Glavina del Rio T."/>
            <person name="Hammon N."/>
            <person name="Israni S."/>
            <person name="Dalin E."/>
            <person name="Tice H."/>
            <person name="Pitluck S."/>
            <person name="Chertkov O."/>
            <person name="Brettin T."/>
            <person name="Bruce D."/>
            <person name="Han C."/>
            <person name="Tapia R."/>
            <person name="Gilna P."/>
            <person name="Schmutz J."/>
            <person name="Larimer F."/>
            <person name="Land M."/>
            <person name="Hauser L."/>
            <person name="Kyrpides N."/>
            <person name="Mikhailova N."/>
            <person name="Wu J.H.D."/>
            <person name="Newcomb M."/>
            <person name="Richardson P."/>
        </authorList>
    </citation>
    <scope>NUCLEOTIDE SEQUENCE [LARGE SCALE GENOMIC DNA]</scope>
    <source>
        <strain>ATCC 27405 / DSM 1237 / JCM 9322 / NBRC 103400 / NCIMB 10682 / NRRL B-4536 / VPI 7372</strain>
    </source>
</reference>
<accession>A3DBS4</accession>
<comment type="PTM">
    <text evidence="1">The N-terminus is cleaved by ribosomal processing cysteine protease Prp.</text>
</comment>
<comment type="similarity">
    <text evidence="2">Belongs to the bacterial ribosomal protein bL27 family.</text>
</comment>
<dbReference type="EMBL" id="CP000568">
    <property type="protein sequence ID" value="ABN51403.1"/>
    <property type="molecule type" value="Genomic_DNA"/>
</dbReference>
<dbReference type="RefSeq" id="WP_003512204.1">
    <property type="nucleotide sequence ID" value="NC_009012.1"/>
</dbReference>
<dbReference type="SMR" id="A3DBS4"/>
<dbReference type="STRING" id="203119.Cthe_0162"/>
<dbReference type="GeneID" id="35805491"/>
<dbReference type="KEGG" id="cth:Cthe_0162"/>
<dbReference type="eggNOG" id="COG0211">
    <property type="taxonomic scope" value="Bacteria"/>
</dbReference>
<dbReference type="HOGENOM" id="CLU_095424_4_0_9"/>
<dbReference type="OrthoDB" id="9803474at2"/>
<dbReference type="Proteomes" id="UP000002145">
    <property type="component" value="Chromosome"/>
</dbReference>
<dbReference type="GO" id="GO:0022625">
    <property type="term" value="C:cytosolic large ribosomal subunit"/>
    <property type="evidence" value="ECO:0007669"/>
    <property type="project" value="TreeGrafter"/>
</dbReference>
<dbReference type="GO" id="GO:0003735">
    <property type="term" value="F:structural constituent of ribosome"/>
    <property type="evidence" value="ECO:0007669"/>
    <property type="project" value="InterPro"/>
</dbReference>
<dbReference type="GO" id="GO:0006412">
    <property type="term" value="P:translation"/>
    <property type="evidence" value="ECO:0007669"/>
    <property type="project" value="UniProtKB-UniRule"/>
</dbReference>
<dbReference type="FunFam" id="2.40.50.100:FF:000004">
    <property type="entry name" value="50S ribosomal protein L27"/>
    <property type="match status" value="1"/>
</dbReference>
<dbReference type="Gene3D" id="2.40.50.100">
    <property type="match status" value="1"/>
</dbReference>
<dbReference type="HAMAP" id="MF_00539">
    <property type="entry name" value="Ribosomal_bL27"/>
    <property type="match status" value="1"/>
</dbReference>
<dbReference type="InterPro" id="IPR001684">
    <property type="entry name" value="Ribosomal_bL27"/>
</dbReference>
<dbReference type="InterPro" id="IPR018261">
    <property type="entry name" value="Ribosomal_bL27_CS"/>
</dbReference>
<dbReference type="NCBIfam" id="TIGR00062">
    <property type="entry name" value="L27"/>
    <property type="match status" value="1"/>
</dbReference>
<dbReference type="PANTHER" id="PTHR15893:SF0">
    <property type="entry name" value="LARGE RIBOSOMAL SUBUNIT PROTEIN BL27M"/>
    <property type="match status" value="1"/>
</dbReference>
<dbReference type="PANTHER" id="PTHR15893">
    <property type="entry name" value="RIBOSOMAL PROTEIN L27"/>
    <property type="match status" value="1"/>
</dbReference>
<dbReference type="Pfam" id="PF01016">
    <property type="entry name" value="Ribosomal_L27"/>
    <property type="match status" value="1"/>
</dbReference>
<dbReference type="PRINTS" id="PR00063">
    <property type="entry name" value="RIBOSOMALL27"/>
</dbReference>
<dbReference type="SUPFAM" id="SSF110324">
    <property type="entry name" value="Ribosomal L27 protein-like"/>
    <property type="match status" value="1"/>
</dbReference>
<dbReference type="PROSITE" id="PS00831">
    <property type="entry name" value="RIBOSOMAL_L27"/>
    <property type="match status" value="1"/>
</dbReference>
<feature type="propeptide" id="PRO_0000459890" evidence="1">
    <location>
        <begin position="1"/>
        <end position="9"/>
    </location>
</feature>
<feature type="chain" id="PRO_1000128724" description="Large ribosomal subunit protein bL27">
    <location>
        <begin position="10"/>
        <end position="92"/>
    </location>
</feature>
<sequence>MIKANLQLFAHKKGVGSTRNGRDSESKRLGVKRGDGQFVKAGNILVRQRGTKIHPGLNVGKGKDDTLFALVDGRVKFSRLGKDRKQVSIIPA</sequence>
<evidence type="ECO:0000250" key="1">
    <source>
        <dbReference type="UniProtKB" id="Q2FXT0"/>
    </source>
</evidence>
<evidence type="ECO:0000255" key="2">
    <source>
        <dbReference type="HAMAP-Rule" id="MF_00539"/>
    </source>
</evidence>
<evidence type="ECO:0000305" key="3"/>
<keyword id="KW-1185">Reference proteome</keyword>
<keyword id="KW-0687">Ribonucleoprotein</keyword>
<keyword id="KW-0689">Ribosomal protein</keyword>
<gene>
    <name evidence="2" type="primary">rpmA</name>
    <name type="ordered locus">Cthe_0162</name>
</gene>
<organism>
    <name type="scientific">Acetivibrio thermocellus (strain ATCC 27405 / DSM 1237 / JCM 9322 / NBRC 103400 / NCIMB 10682 / NRRL B-4536 / VPI 7372)</name>
    <name type="common">Clostridium thermocellum</name>
    <dbReference type="NCBI Taxonomy" id="203119"/>
    <lineage>
        <taxon>Bacteria</taxon>
        <taxon>Bacillati</taxon>
        <taxon>Bacillota</taxon>
        <taxon>Clostridia</taxon>
        <taxon>Eubacteriales</taxon>
        <taxon>Oscillospiraceae</taxon>
        <taxon>Acetivibrio</taxon>
    </lineage>
</organism>
<protein>
    <recommendedName>
        <fullName evidence="2">Large ribosomal subunit protein bL27</fullName>
    </recommendedName>
    <alternativeName>
        <fullName evidence="3">50S ribosomal protein L27</fullName>
    </alternativeName>
</protein>
<proteinExistence type="inferred from homology"/>
<name>RL27_ACET2</name>